<accession>P0C185</accession>
<organism>
    <name type="scientific">Tityus costatus</name>
    <name type="common">Brazilian scorpion</name>
    <dbReference type="NCBI Taxonomy" id="309814"/>
    <lineage>
        <taxon>Eukaryota</taxon>
        <taxon>Metazoa</taxon>
        <taxon>Ecdysozoa</taxon>
        <taxon>Arthropoda</taxon>
        <taxon>Chelicerata</taxon>
        <taxon>Arachnida</taxon>
        <taxon>Scorpiones</taxon>
        <taxon>Buthida</taxon>
        <taxon>Buthoidea</taxon>
        <taxon>Buthidae</taxon>
        <taxon>Tityus</taxon>
    </lineage>
</organism>
<proteinExistence type="evidence at protein level"/>
<protein>
    <recommendedName>
        <fullName>Potassium channel toxin alpha-KTx 12.3</fullName>
    </recommendedName>
    <alternativeName>
        <fullName>Butantoxin-like peptide</fullName>
    </alternativeName>
    <alternativeName>
        <fullName>Tco30</fullName>
    </alternativeName>
</protein>
<dbReference type="BMRB" id="P0C185"/>
<dbReference type="SMR" id="P0C185"/>
<dbReference type="GO" id="GO:0005576">
    <property type="term" value="C:extracellular region"/>
    <property type="evidence" value="ECO:0007669"/>
    <property type="project" value="UniProtKB-SubCell"/>
</dbReference>
<dbReference type="GO" id="GO:0008200">
    <property type="term" value="F:ion channel inhibitor activity"/>
    <property type="evidence" value="ECO:0007669"/>
    <property type="project" value="InterPro"/>
</dbReference>
<dbReference type="GO" id="GO:0015459">
    <property type="term" value="F:potassium channel regulator activity"/>
    <property type="evidence" value="ECO:0007669"/>
    <property type="project" value="UniProtKB-KW"/>
</dbReference>
<dbReference type="GO" id="GO:0090729">
    <property type="term" value="F:toxin activity"/>
    <property type="evidence" value="ECO:0007669"/>
    <property type="project" value="UniProtKB-KW"/>
</dbReference>
<dbReference type="Gene3D" id="3.30.30.10">
    <property type="entry name" value="Knottin, scorpion toxin-like"/>
    <property type="match status" value="1"/>
</dbReference>
<dbReference type="InterPro" id="IPR036574">
    <property type="entry name" value="Scorpion_toxin-like_sf"/>
</dbReference>
<dbReference type="InterPro" id="IPR001947">
    <property type="entry name" value="Scorpion_toxinS_K_inh"/>
</dbReference>
<dbReference type="Pfam" id="PF00451">
    <property type="entry name" value="Toxin_2"/>
    <property type="match status" value="1"/>
</dbReference>
<dbReference type="PRINTS" id="PR00286">
    <property type="entry name" value="CHARYBDTOXIN"/>
</dbReference>
<dbReference type="SUPFAM" id="SSF57095">
    <property type="entry name" value="Scorpion toxin-like"/>
    <property type="match status" value="1"/>
</dbReference>
<dbReference type="PROSITE" id="PS01138">
    <property type="entry name" value="SCORP_SHORT_TOXIN"/>
    <property type="match status" value="1"/>
</dbReference>
<reference key="1">
    <citation type="journal article" date="2005" name="Toxicon">
        <title>The Brazilian scorpion Tityus costatus Karsch: genes, peptides and function.</title>
        <authorList>
            <person name="Diego-Garcia E."/>
            <person name="Batista C.V.F."/>
            <person name="Garcia-Gomez B.I."/>
            <person name="Lucas S."/>
            <person name="Candido D.M."/>
            <person name="Gomez-Lagunas F."/>
            <person name="Possani L.D."/>
        </authorList>
    </citation>
    <scope>PROTEIN SEQUENCE</scope>
    <scope>FUNCTION</scope>
    <scope>MASS SPECTROMETRY</scope>
    <source>
        <tissue>Venom</tissue>
    </source>
</reference>
<comment type="function">
    <text evidence="1 2">Inhibits high conductance calcium-activated potassium channels (KCNMA) (By similarity). Inhibits Shaker B potassium channels.</text>
</comment>
<comment type="subcellular location">
    <subcellularLocation>
        <location>Secreted</location>
    </subcellularLocation>
</comment>
<comment type="tissue specificity">
    <text>Expressed by the venom gland.</text>
</comment>
<comment type="domain">
    <text evidence="3">Has the structural arrangement of an alpha-helix connected to antiparallel beta-sheets by disulfide bonds (CS-alpha/beta).</text>
</comment>
<comment type="mass spectrometry" mass="4564.0" method="Electrospray" evidence="2"/>
<comment type="similarity">
    <text evidence="3">Belongs to the short scorpion toxin superfamily. Potassium channel inhibitor family. Alpha-KTx 12 subfamily.</text>
</comment>
<name>KA123_TITCO</name>
<evidence type="ECO:0000250" key="1"/>
<evidence type="ECO:0000269" key="2">
    <source>
    </source>
</evidence>
<evidence type="ECO:0000305" key="3"/>
<keyword id="KW-1221">Calcium-activated potassium channel impairing toxin</keyword>
<keyword id="KW-0903">Direct protein sequencing</keyword>
<keyword id="KW-1015">Disulfide bond</keyword>
<keyword id="KW-0872">Ion channel impairing toxin</keyword>
<keyword id="KW-0528">Neurotoxin</keyword>
<keyword id="KW-0632">Potassium channel impairing toxin</keyword>
<keyword id="KW-0964">Secreted</keyword>
<keyword id="KW-0800">Toxin</keyword>
<feature type="chain" id="PRO_0000231506" description="Potassium channel toxin alpha-KTx 12.3">
    <location>
        <begin position="1"/>
        <end position="40"/>
    </location>
</feature>
<feature type="site" description="Basic residue of the functional dyad" evidence="1">
    <location>
        <position position="30"/>
    </location>
</feature>
<feature type="site" description="Aromatic residue of the functional dyad" evidence="1">
    <location>
        <position position="39"/>
    </location>
</feature>
<feature type="disulfide bond" evidence="1">
    <location>
        <begin position="2"/>
        <end position="5"/>
    </location>
</feature>
<feature type="disulfide bond" evidence="1">
    <location>
        <begin position="10"/>
        <end position="31"/>
    </location>
</feature>
<feature type="disulfide bond" evidence="1">
    <location>
        <begin position="16"/>
        <end position="36"/>
    </location>
</feature>
<feature type="disulfide bond" evidence="1">
    <location>
        <begin position="20"/>
        <end position="38"/>
    </location>
</feature>
<sequence length="40" mass="4572">WCSTCLDLECGASRECYDPCFKAFGRAHGKCMNNKCRCYT</sequence>